<keyword id="KW-0031">Aminopeptidase</keyword>
<keyword id="KW-0963">Cytoplasm</keyword>
<keyword id="KW-0378">Hydrolase</keyword>
<keyword id="KW-0479">Metal-binding</keyword>
<keyword id="KW-0482">Metalloprotease</keyword>
<keyword id="KW-0645">Protease</keyword>
<keyword id="KW-1185">Reference proteome</keyword>
<keyword id="KW-0862">Zinc</keyword>
<gene>
    <name evidence="1" type="primary">pepT</name>
    <name type="ordered locus">stu1139</name>
</gene>
<feature type="chain" id="PRO_0000185327" description="Peptidase T">
    <location>
        <begin position="1"/>
        <end position="407"/>
    </location>
</feature>
<feature type="active site" evidence="1">
    <location>
        <position position="84"/>
    </location>
</feature>
<feature type="active site" description="Proton acceptor" evidence="1">
    <location>
        <position position="177"/>
    </location>
</feature>
<feature type="binding site" evidence="1">
    <location>
        <position position="82"/>
    </location>
    <ligand>
        <name>Zn(2+)</name>
        <dbReference type="ChEBI" id="CHEBI:29105"/>
        <label>1</label>
    </ligand>
</feature>
<feature type="binding site" evidence="1">
    <location>
        <position position="143"/>
    </location>
    <ligand>
        <name>Zn(2+)</name>
        <dbReference type="ChEBI" id="CHEBI:29105"/>
        <label>1</label>
    </ligand>
</feature>
<feature type="binding site" evidence="1">
    <location>
        <position position="143"/>
    </location>
    <ligand>
        <name>Zn(2+)</name>
        <dbReference type="ChEBI" id="CHEBI:29105"/>
        <label>2</label>
    </ligand>
</feature>
<feature type="binding site" evidence="1">
    <location>
        <position position="178"/>
    </location>
    <ligand>
        <name>Zn(2+)</name>
        <dbReference type="ChEBI" id="CHEBI:29105"/>
        <label>2</label>
    </ligand>
</feature>
<feature type="binding site" evidence="1">
    <location>
        <position position="200"/>
    </location>
    <ligand>
        <name>Zn(2+)</name>
        <dbReference type="ChEBI" id="CHEBI:29105"/>
        <label>1</label>
    </ligand>
</feature>
<feature type="binding site" evidence="1">
    <location>
        <position position="382"/>
    </location>
    <ligand>
        <name>Zn(2+)</name>
        <dbReference type="ChEBI" id="CHEBI:29105"/>
        <label>2</label>
    </ligand>
</feature>
<reference key="1">
    <citation type="journal article" date="2004" name="Nat. Biotechnol.">
        <title>Complete sequence and comparative genome analysis of the dairy bacterium Streptococcus thermophilus.</title>
        <authorList>
            <person name="Bolotin A."/>
            <person name="Quinquis B."/>
            <person name="Renault P."/>
            <person name="Sorokin A."/>
            <person name="Ehrlich S.D."/>
            <person name="Kulakauskas S."/>
            <person name="Lapidus A."/>
            <person name="Goltsman E."/>
            <person name="Mazur M."/>
            <person name="Pusch G.D."/>
            <person name="Fonstein M."/>
            <person name="Overbeek R."/>
            <person name="Kyprides N."/>
            <person name="Purnelle B."/>
            <person name="Prozzi D."/>
            <person name="Ngui K."/>
            <person name="Masuy D."/>
            <person name="Hancy F."/>
            <person name="Burteau S."/>
            <person name="Boutry M."/>
            <person name="Delcour J."/>
            <person name="Goffeau A."/>
            <person name="Hols P."/>
        </authorList>
    </citation>
    <scope>NUCLEOTIDE SEQUENCE [LARGE SCALE GENOMIC DNA]</scope>
    <source>
        <strain>ATCC BAA-250 / LMG 18311</strain>
    </source>
</reference>
<evidence type="ECO:0000255" key="1">
    <source>
        <dbReference type="HAMAP-Rule" id="MF_00550"/>
    </source>
</evidence>
<comment type="function">
    <text evidence="1">Cleaves the N-terminal amino acid of tripeptides.</text>
</comment>
<comment type="catalytic activity">
    <reaction evidence="1">
        <text>Release of the N-terminal residue from a tripeptide.</text>
        <dbReference type="EC" id="3.4.11.4"/>
    </reaction>
</comment>
<comment type="cofactor">
    <cofactor evidence="1">
        <name>Zn(2+)</name>
        <dbReference type="ChEBI" id="CHEBI:29105"/>
    </cofactor>
    <text evidence="1">Binds 2 Zn(2+) ions per subunit.</text>
</comment>
<comment type="subcellular location">
    <subcellularLocation>
        <location evidence="1">Cytoplasm</location>
    </subcellularLocation>
</comment>
<comment type="similarity">
    <text evidence="1">Belongs to the peptidase M20B family.</text>
</comment>
<sequence>MAYDLLLERFLRYAKINTRSDENATRTPTTQSQVDFALNILKPELEELGLSNIHYLESNGYLVATLPANDDRLTRKIGFISHMDTADFNAEGVSPQVIESYDGGIIPLGTSGYNLDPADFPNLQNYIGQTLITTDGTTLLGADDKSGIAEIMTALAHLKANPEIKHCEIRVGFGPDEEIGIGADKFDVDDFDVDFAYTVDGGPLGELQYETFSAAAAELIFHGRNVHPGTAKGQMVNALQLAIDFHNQLPAEDRPELTDGYQGFNHLQTMTGTVEEANSSYIIRDFETESFENRKATFQEIADKMNQAYGQTRVDLVIKDQYYNMRQVIEKDMMPVELAKEVMEDLGIVPVIEPIRGGTDGSKISFMGIPTPNIFAGGENMHGRYEFVSLQTMEKAVDVILGIVSKP</sequence>
<protein>
    <recommendedName>
        <fullName evidence="1">Peptidase T</fullName>
        <ecNumber evidence="1">3.4.11.4</ecNumber>
    </recommendedName>
    <alternativeName>
        <fullName evidence="1">Aminotripeptidase</fullName>
        <shortName evidence="1">Tripeptidase</shortName>
    </alternativeName>
    <alternativeName>
        <fullName evidence="1">Tripeptide aminopeptidase</fullName>
    </alternativeName>
</protein>
<accession>Q5M465</accession>
<name>PEPT_STRT2</name>
<dbReference type="EC" id="3.4.11.4" evidence="1"/>
<dbReference type="EMBL" id="CP000023">
    <property type="protein sequence ID" value="AAV60777.1"/>
    <property type="molecule type" value="Genomic_DNA"/>
</dbReference>
<dbReference type="RefSeq" id="WP_011226068.1">
    <property type="nucleotide sequence ID" value="NC_006448.1"/>
</dbReference>
<dbReference type="SMR" id="Q5M465"/>
<dbReference type="STRING" id="264199.stu1139"/>
<dbReference type="MEROPS" id="M20.003"/>
<dbReference type="GeneID" id="66898935"/>
<dbReference type="KEGG" id="stl:stu1139"/>
<dbReference type="PATRIC" id="fig|264199.4.peg.1120"/>
<dbReference type="eggNOG" id="COG2195">
    <property type="taxonomic scope" value="Bacteria"/>
</dbReference>
<dbReference type="HOGENOM" id="CLU_053676_0_0_9"/>
<dbReference type="Proteomes" id="UP000001170">
    <property type="component" value="Chromosome"/>
</dbReference>
<dbReference type="GO" id="GO:0005829">
    <property type="term" value="C:cytosol"/>
    <property type="evidence" value="ECO:0007669"/>
    <property type="project" value="TreeGrafter"/>
</dbReference>
<dbReference type="GO" id="GO:0008237">
    <property type="term" value="F:metallopeptidase activity"/>
    <property type="evidence" value="ECO:0007669"/>
    <property type="project" value="UniProtKB-KW"/>
</dbReference>
<dbReference type="GO" id="GO:0045148">
    <property type="term" value="F:tripeptide aminopeptidase activity"/>
    <property type="evidence" value="ECO:0007669"/>
    <property type="project" value="UniProtKB-UniRule"/>
</dbReference>
<dbReference type="GO" id="GO:0008270">
    <property type="term" value="F:zinc ion binding"/>
    <property type="evidence" value="ECO:0007669"/>
    <property type="project" value="UniProtKB-UniRule"/>
</dbReference>
<dbReference type="GO" id="GO:0043171">
    <property type="term" value="P:peptide catabolic process"/>
    <property type="evidence" value="ECO:0007669"/>
    <property type="project" value="UniProtKB-UniRule"/>
</dbReference>
<dbReference type="GO" id="GO:0006508">
    <property type="term" value="P:proteolysis"/>
    <property type="evidence" value="ECO:0007669"/>
    <property type="project" value="UniProtKB-UniRule"/>
</dbReference>
<dbReference type="CDD" id="cd03892">
    <property type="entry name" value="M20_peptT"/>
    <property type="match status" value="1"/>
</dbReference>
<dbReference type="FunFam" id="3.30.70.360:FF:000002">
    <property type="entry name" value="Peptidase T"/>
    <property type="match status" value="1"/>
</dbReference>
<dbReference type="Gene3D" id="3.30.70.360">
    <property type="match status" value="1"/>
</dbReference>
<dbReference type="Gene3D" id="3.40.630.10">
    <property type="entry name" value="Zn peptidases"/>
    <property type="match status" value="1"/>
</dbReference>
<dbReference type="HAMAP" id="MF_00550">
    <property type="entry name" value="Aminopeptidase_M20"/>
    <property type="match status" value="1"/>
</dbReference>
<dbReference type="InterPro" id="IPR001261">
    <property type="entry name" value="ArgE/DapE_CS"/>
</dbReference>
<dbReference type="InterPro" id="IPR036264">
    <property type="entry name" value="Bact_exopeptidase_dim_dom"/>
</dbReference>
<dbReference type="InterPro" id="IPR002933">
    <property type="entry name" value="Peptidase_M20"/>
</dbReference>
<dbReference type="InterPro" id="IPR011650">
    <property type="entry name" value="Peptidase_M20_dimer"/>
</dbReference>
<dbReference type="InterPro" id="IPR010161">
    <property type="entry name" value="Peptidase_M20B"/>
</dbReference>
<dbReference type="NCBIfam" id="TIGR01882">
    <property type="entry name" value="peptidase-T"/>
    <property type="match status" value="1"/>
</dbReference>
<dbReference type="NCBIfam" id="NF003976">
    <property type="entry name" value="PRK05469.1"/>
    <property type="match status" value="1"/>
</dbReference>
<dbReference type="NCBIfam" id="NF009920">
    <property type="entry name" value="PRK13381.1"/>
    <property type="match status" value="1"/>
</dbReference>
<dbReference type="PANTHER" id="PTHR42994">
    <property type="entry name" value="PEPTIDASE T"/>
    <property type="match status" value="1"/>
</dbReference>
<dbReference type="PANTHER" id="PTHR42994:SF1">
    <property type="entry name" value="PEPTIDASE T"/>
    <property type="match status" value="1"/>
</dbReference>
<dbReference type="Pfam" id="PF07687">
    <property type="entry name" value="M20_dimer"/>
    <property type="match status" value="1"/>
</dbReference>
<dbReference type="Pfam" id="PF01546">
    <property type="entry name" value="Peptidase_M20"/>
    <property type="match status" value="1"/>
</dbReference>
<dbReference type="PIRSF" id="PIRSF037215">
    <property type="entry name" value="Peptidase_M20B"/>
    <property type="match status" value="1"/>
</dbReference>
<dbReference type="SUPFAM" id="SSF55031">
    <property type="entry name" value="Bacterial exopeptidase dimerisation domain"/>
    <property type="match status" value="1"/>
</dbReference>
<dbReference type="SUPFAM" id="SSF53187">
    <property type="entry name" value="Zn-dependent exopeptidases"/>
    <property type="match status" value="1"/>
</dbReference>
<dbReference type="PROSITE" id="PS00758">
    <property type="entry name" value="ARGE_DAPE_CPG2_1"/>
    <property type="match status" value="1"/>
</dbReference>
<dbReference type="PROSITE" id="PS00759">
    <property type="entry name" value="ARGE_DAPE_CPG2_2"/>
    <property type="match status" value="1"/>
</dbReference>
<organism>
    <name type="scientific">Streptococcus thermophilus (strain ATCC BAA-250 / LMG 18311)</name>
    <dbReference type="NCBI Taxonomy" id="264199"/>
    <lineage>
        <taxon>Bacteria</taxon>
        <taxon>Bacillati</taxon>
        <taxon>Bacillota</taxon>
        <taxon>Bacilli</taxon>
        <taxon>Lactobacillales</taxon>
        <taxon>Streptococcaceae</taxon>
        <taxon>Streptococcus</taxon>
    </lineage>
</organism>
<proteinExistence type="inferred from homology"/>